<organism>
    <name type="scientific">Arabidopsis thaliana</name>
    <name type="common">Mouse-ear cress</name>
    <dbReference type="NCBI Taxonomy" id="3702"/>
    <lineage>
        <taxon>Eukaryota</taxon>
        <taxon>Viridiplantae</taxon>
        <taxon>Streptophyta</taxon>
        <taxon>Embryophyta</taxon>
        <taxon>Tracheophyta</taxon>
        <taxon>Spermatophyta</taxon>
        <taxon>Magnoliopsida</taxon>
        <taxon>eudicotyledons</taxon>
        <taxon>Gunneridae</taxon>
        <taxon>Pentapetalae</taxon>
        <taxon>rosids</taxon>
        <taxon>malvids</taxon>
        <taxon>Brassicales</taxon>
        <taxon>Brassicaceae</taxon>
        <taxon>Camelineae</taxon>
        <taxon>Arabidopsis</taxon>
    </lineage>
</organism>
<keyword id="KW-0025">Alternative splicing</keyword>
<keyword id="KW-0150">Chloroplast</keyword>
<keyword id="KW-0276">Fatty acid metabolism</keyword>
<keyword id="KW-0443">Lipid metabolism</keyword>
<keyword id="KW-0472">Membrane</keyword>
<keyword id="KW-0560">Oxidoreductase</keyword>
<keyword id="KW-0934">Plastid</keyword>
<keyword id="KW-1185">Reference proteome</keyword>
<keyword id="KW-0809">Transit peptide</keyword>
<keyword id="KW-0812">Transmembrane</keyword>
<keyword id="KW-1133">Transmembrane helix</keyword>
<comment type="function">
    <text evidence="1">Fatty acid desaturase involved in the production of chloroplast-specific phosphatidylglycerol molecular species. Catalyzes the formation of a trans double bond introduced close to the carboxyl group of palmitic acid, which is specifically esterified to the sn-2 glyceryl carbon of phosphatidylglycerol (By similarity).</text>
</comment>
<comment type="pathway">
    <text>Lipid metabolism; fatty acid metabolism.</text>
</comment>
<comment type="subcellular location">
    <subcellularLocation>
        <location evidence="1">Plastid</location>
        <location evidence="1">Chloroplast membrane</location>
        <topology evidence="1">Multi-pass membrane protein</topology>
    </subcellularLocation>
</comment>
<comment type="alternative products">
    <event type="alternative splicing"/>
    <isoform>
        <id>O81006-1</id>
        <name>1</name>
        <sequence type="displayed"/>
    </isoform>
    <isoform>
        <id>O81006-2</id>
        <name>2</name>
        <sequence type="described" ref="VSP_055334"/>
    </isoform>
</comment>
<comment type="similarity">
    <text evidence="4">Belongs to the fatty acid desaturase CarF family.</text>
</comment>
<protein>
    <recommendedName>
        <fullName>Fatty acid desaturase 4-like 2, chloroplastic</fullName>
        <shortName>FAD4-L2</shortName>
        <ecNumber>1.14.19.-</ecNumber>
    </recommendedName>
</protein>
<proteinExistence type="evidence at transcript level"/>
<feature type="transit peptide" description="Chloroplast" evidence="2">
    <location>
        <begin position="1"/>
        <end position="30"/>
    </location>
</feature>
<feature type="chain" id="PRO_0000429929" description="Fatty acid desaturase 4-like 2, chloroplastic">
    <location>
        <begin position="31"/>
        <end position="279"/>
    </location>
</feature>
<feature type="transmembrane region" description="Helical" evidence="2">
    <location>
        <begin position="68"/>
        <end position="90"/>
    </location>
</feature>
<feature type="transmembrane region" description="Helical" evidence="2">
    <location>
        <begin position="98"/>
        <end position="118"/>
    </location>
</feature>
<feature type="transmembrane region" description="Helical" evidence="2">
    <location>
        <begin position="178"/>
        <end position="198"/>
    </location>
</feature>
<feature type="splice variant" id="VSP_055334" description="In isoform 2." evidence="3">
    <location>
        <begin position="231"/>
        <end position="279"/>
    </location>
</feature>
<reference key="1">
    <citation type="journal article" date="1999" name="Nature">
        <title>Sequence and analysis of chromosome 2 of the plant Arabidopsis thaliana.</title>
        <authorList>
            <person name="Lin X."/>
            <person name="Kaul S."/>
            <person name="Rounsley S.D."/>
            <person name="Shea T.P."/>
            <person name="Benito M.-I."/>
            <person name="Town C.D."/>
            <person name="Fujii C.Y."/>
            <person name="Mason T.M."/>
            <person name="Bowman C.L."/>
            <person name="Barnstead M.E."/>
            <person name="Feldblyum T.V."/>
            <person name="Buell C.R."/>
            <person name="Ketchum K.A."/>
            <person name="Lee J.J."/>
            <person name="Ronning C.M."/>
            <person name="Koo H.L."/>
            <person name="Moffat K.S."/>
            <person name="Cronin L.A."/>
            <person name="Shen M."/>
            <person name="Pai G."/>
            <person name="Van Aken S."/>
            <person name="Umayam L."/>
            <person name="Tallon L.J."/>
            <person name="Gill J.E."/>
            <person name="Adams M.D."/>
            <person name="Carrera A.J."/>
            <person name="Creasy T.H."/>
            <person name="Goodman H.M."/>
            <person name="Somerville C.R."/>
            <person name="Copenhaver G.P."/>
            <person name="Preuss D."/>
            <person name="Nierman W.C."/>
            <person name="White O."/>
            <person name="Eisen J.A."/>
            <person name="Salzberg S.L."/>
            <person name="Fraser C.M."/>
            <person name="Venter J.C."/>
        </authorList>
    </citation>
    <scope>NUCLEOTIDE SEQUENCE [LARGE SCALE GENOMIC DNA]</scope>
    <source>
        <strain>cv. Columbia</strain>
    </source>
</reference>
<reference key="2">
    <citation type="journal article" date="2017" name="Plant J.">
        <title>Araport11: a complete reannotation of the Arabidopsis thaliana reference genome.</title>
        <authorList>
            <person name="Cheng C.Y."/>
            <person name="Krishnakumar V."/>
            <person name="Chan A.P."/>
            <person name="Thibaud-Nissen F."/>
            <person name="Schobel S."/>
            <person name="Town C.D."/>
        </authorList>
    </citation>
    <scope>GENOME REANNOTATION</scope>
    <source>
        <strain>cv. Columbia</strain>
    </source>
</reference>
<reference key="3">
    <citation type="journal article" date="2005" name="Plant Physiol.">
        <title>Analysis of the cDNAs of hypothetical genes on Arabidopsis chromosome 2 reveals numerous transcript variants.</title>
        <authorList>
            <person name="Xiao Y.-L."/>
            <person name="Smith S.R."/>
            <person name="Ishmael N."/>
            <person name="Redman J.C."/>
            <person name="Kumar N."/>
            <person name="Monaghan E.L."/>
            <person name="Ayele M."/>
            <person name="Haas B.J."/>
            <person name="Wu H.C."/>
            <person name="Town C.D."/>
        </authorList>
    </citation>
    <scope>NUCLEOTIDE SEQUENCE [LARGE SCALE MRNA] (ISOFORM 2)</scope>
    <source>
        <strain>cv. Columbia</strain>
    </source>
</reference>
<reference key="4">
    <citation type="submission" date="2004-06" db="EMBL/GenBank/DDBJ databases">
        <authorList>
            <person name="Underwood B.A."/>
            <person name="Xiao Y.-L."/>
            <person name="Moskal W.A. Jr."/>
            <person name="Monaghan E.L."/>
            <person name="Wang W."/>
            <person name="Redman J.C."/>
            <person name="Wu H.C."/>
            <person name="Utterback T."/>
            <person name="Town C.D."/>
        </authorList>
    </citation>
    <scope>NUCLEOTIDE SEQUENCE [LARGE SCALE GENOMIC DNA] (ISOFORM 2)</scope>
    <source>
        <strain>cv. Columbia</strain>
    </source>
</reference>
<reference key="5">
    <citation type="journal article" date="2009" name="Plant J.">
        <title>FATTY ACID DESATURASE4 of Arabidopsis encodes a protein distinct from characterized fatty acid desaturases.</title>
        <authorList>
            <person name="Gao J."/>
            <person name="Ajjawi I."/>
            <person name="Manoli A."/>
            <person name="Sawin A."/>
            <person name="Xu C."/>
            <person name="Froehlich J.E."/>
            <person name="Last R.L."/>
            <person name="Benning C."/>
        </authorList>
    </citation>
    <scope>GENE FAMILY</scope>
    <scope>NOMENCLATURE</scope>
</reference>
<evidence type="ECO:0000250" key="1"/>
<evidence type="ECO:0000255" key="2"/>
<evidence type="ECO:0000303" key="3">
    <source>
    </source>
</evidence>
<evidence type="ECO:0000305" key="4"/>
<accession>O81006</accession>
<accession>Q6DR28</accession>
<name>FD4L2_ARATH</name>
<sequence length="279" mass="31505">MATSLQTKYTLNPITNNIPRSHRPSFLRVTSTTNSQPNHEMKLVVEQRLVNPPLSNDPTLQSTWTHRLWVAAGCTTVFVSFSKSIIGAFGSHLWLEPSLAGFAGYILADLGSGVYHWATDNYGDESTPLVGIHIEDSQDHHKCPWTITKRQFANNLHFMARGTTLIVLPLDLAFDDHVVHGFVSMFAFCVLFCQLFHAWAHGTKSKLPPLVVGLQDIGLLVSRIHHMNHHRAPYNNNYCVVSGVWNKVLDESNVFKAMEMVLYIQLGVRPRSWTEPNYE</sequence>
<gene>
    <name type="primary">FAD4L2</name>
    <name type="ordered locus">At2g22890</name>
    <name type="ORF">T20K9.10</name>
</gene>
<dbReference type="EC" id="1.14.19.-"/>
<dbReference type="EMBL" id="AC004786">
    <property type="protein sequence ID" value="AAC32436.1"/>
    <property type="molecule type" value="Genomic_DNA"/>
</dbReference>
<dbReference type="EMBL" id="CP002685">
    <property type="protein sequence ID" value="AEC07369.1"/>
    <property type="molecule type" value="Genomic_DNA"/>
</dbReference>
<dbReference type="EMBL" id="AY600553">
    <property type="protein sequence ID" value="AAT68352.1"/>
    <property type="molecule type" value="mRNA"/>
</dbReference>
<dbReference type="EMBL" id="AY649287">
    <property type="protein sequence ID" value="AAT69204.1"/>
    <property type="molecule type" value="Genomic_DNA"/>
</dbReference>
<dbReference type="PIR" id="B84618">
    <property type="entry name" value="B84618"/>
</dbReference>
<dbReference type="RefSeq" id="NP_179874.1">
    <molecule id="O81006-1"/>
    <property type="nucleotide sequence ID" value="NM_127854.3"/>
</dbReference>
<dbReference type="FunCoup" id="O81006">
    <property type="interactions" value="1056"/>
</dbReference>
<dbReference type="STRING" id="3702.O81006"/>
<dbReference type="PaxDb" id="3702-AT2G22890.1"/>
<dbReference type="EnsemblPlants" id="AT2G22890.1">
    <molecule id="O81006-1"/>
    <property type="protein sequence ID" value="AT2G22890.1"/>
    <property type="gene ID" value="AT2G22890"/>
</dbReference>
<dbReference type="GeneID" id="816820"/>
<dbReference type="Gramene" id="AT2G22890.1">
    <molecule id="O81006-1"/>
    <property type="protein sequence ID" value="AT2G22890.1"/>
    <property type="gene ID" value="AT2G22890"/>
</dbReference>
<dbReference type="KEGG" id="ath:AT2G22890"/>
<dbReference type="Araport" id="AT2G22890"/>
<dbReference type="TAIR" id="AT2G22890"/>
<dbReference type="eggNOG" id="KOG3011">
    <property type="taxonomic scope" value="Eukaryota"/>
</dbReference>
<dbReference type="HOGENOM" id="CLU_065233_0_0_1"/>
<dbReference type="InParanoid" id="O81006"/>
<dbReference type="OMA" id="KFVWTCY"/>
<dbReference type="OrthoDB" id="5103at2759"/>
<dbReference type="PhylomeDB" id="O81006"/>
<dbReference type="UniPathway" id="UPA00199"/>
<dbReference type="PRO" id="PR:O81006"/>
<dbReference type="Proteomes" id="UP000006548">
    <property type="component" value="Chromosome 2"/>
</dbReference>
<dbReference type="ExpressionAtlas" id="O81006">
    <property type="expression patterns" value="baseline and differential"/>
</dbReference>
<dbReference type="GO" id="GO:0031969">
    <property type="term" value="C:chloroplast membrane"/>
    <property type="evidence" value="ECO:0007669"/>
    <property type="project" value="UniProtKB-SubCell"/>
</dbReference>
<dbReference type="GO" id="GO:0016491">
    <property type="term" value="F:oxidoreductase activity"/>
    <property type="evidence" value="ECO:0007669"/>
    <property type="project" value="UniProtKB-KW"/>
</dbReference>
<dbReference type="GO" id="GO:0006631">
    <property type="term" value="P:fatty acid metabolic process"/>
    <property type="evidence" value="ECO:0007669"/>
    <property type="project" value="UniProtKB-UniPathway"/>
</dbReference>
<dbReference type="InterPro" id="IPR052864">
    <property type="entry name" value="Chloroplast_FAD_CarF"/>
</dbReference>
<dbReference type="InterPro" id="IPR019547">
    <property type="entry name" value="Lipid_desat"/>
</dbReference>
<dbReference type="PANTHER" id="PTHR48140">
    <property type="entry name" value="FATTY ACID DESATURASE 4, CHLOROPLASTIC-RELATED"/>
    <property type="match status" value="1"/>
</dbReference>
<dbReference type="PANTHER" id="PTHR48140:SF2">
    <property type="entry name" value="FATTY ACID DESATURASE 4-LIKE 2, CHLOROPLASTIC"/>
    <property type="match status" value="1"/>
</dbReference>
<dbReference type="Pfam" id="PF10520">
    <property type="entry name" value="Lipid_desat"/>
    <property type="match status" value="1"/>
</dbReference>